<reference key="1">
    <citation type="journal article" date="2002" name="J. Mol. Microbiol. Biotechnol.">
        <title>The genome of Methanosarcina mazei: evidence for lateral gene transfer between Bacteria and Archaea.</title>
        <authorList>
            <person name="Deppenmeier U."/>
            <person name="Johann A."/>
            <person name="Hartsch T."/>
            <person name="Merkl R."/>
            <person name="Schmitz R.A."/>
            <person name="Martinez-Arias R."/>
            <person name="Henne A."/>
            <person name="Wiezer A."/>
            <person name="Baeumer S."/>
            <person name="Jacobi C."/>
            <person name="Brueggemann H."/>
            <person name="Lienard T."/>
            <person name="Christmann A."/>
            <person name="Boemecke M."/>
            <person name="Steckel S."/>
            <person name="Bhattacharyya A."/>
            <person name="Lykidis A."/>
            <person name="Overbeek R."/>
            <person name="Klenk H.-P."/>
            <person name="Gunsalus R.P."/>
            <person name="Fritz H.-J."/>
            <person name="Gottschalk G."/>
        </authorList>
    </citation>
    <scope>NUCLEOTIDE SEQUENCE [LARGE SCALE GENOMIC DNA]</scope>
    <source>
        <strain>ATCC BAA-159 / DSM 3647 / Goe1 / Go1 / JCM 11833 / OCM 88</strain>
    </source>
</reference>
<reference key="2">
    <citation type="journal article" date="2010" name="Biochem. Biophys. Res. Commun.">
        <title>Geranylfarnesyl diphosphate synthase from Methanosarcina mazei: Different role, different evolution.</title>
        <authorList>
            <person name="Ogawa T."/>
            <person name="Yoshimura T."/>
            <person name="Hemmi H."/>
        </authorList>
    </citation>
    <scope>FUNCTION</scope>
</reference>
<name>GGPP_METMA</name>
<organism>
    <name type="scientific">Methanosarcina mazei (strain ATCC BAA-159 / DSM 3647 / Goe1 / Go1 / JCM 11833 / OCM 88)</name>
    <name type="common">Methanosarcina frisia</name>
    <dbReference type="NCBI Taxonomy" id="192952"/>
    <lineage>
        <taxon>Archaea</taxon>
        <taxon>Methanobacteriati</taxon>
        <taxon>Methanobacteriota</taxon>
        <taxon>Stenosarchaea group</taxon>
        <taxon>Methanomicrobia</taxon>
        <taxon>Methanosarcinales</taxon>
        <taxon>Methanosarcinaceae</taxon>
        <taxon>Methanosarcina</taxon>
    </lineage>
</organism>
<comment type="function">
    <text evidence="4">Catalyzes the sequential condensation of isopentenyl pyrophosphate with the allylic pyrophosphates to yield geranylgeranyl diphosphate (GGPP) which is a precursor of the ether-linked lipids.</text>
</comment>
<comment type="catalytic activity">
    <reaction>
        <text>isopentenyl diphosphate + (2E,6E)-farnesyl diphosphate = (2E,6E,10E)-geranylgeranyl diphosphate + diphosphate</text>
        <dbReference type="Rhea" id="RHEA:17653"/>
        <dbReference type="ChEBI" id="CHEBI:33019"/>
        <dbReference type="ChEBI" id="CHEBI:58756"/>
        <dbReference type="ChEBI" id="CHEBI:128769"/>
        <dbReference type="ChEBI" id="CHEBI:175763"/>
        <dbReference type="EC" id="2.5.1.29"/>
    </reaction>
</comment>
<comment type="cofactor">
    <cofactor evidence="1">
        <name>Mg(2+)</name>
        <dbReference type="ChEBI" id="CHEBI:18420"/>
    </cofactor>
    <text evidence="1">Binds 2 Mg(2+) ions per subunit.</text>
</comment>
<comment type="pathway">
    <text>Isoprenoid biosynthesis; geranylgeranyl diphosphate biosynthesis; geranylgeranyl diphosphate from farnesyl diphosphate and isopentenyl diphosphate: step 1/1.</text>
</comment>
<comment type="similarity">
    <text evidence="5">Belongs to the FPP/GGPP synthase family.</text>
</comment>
<sequence>MMLMTLVDEIKNRSSHVDAAIDELLPVTRPEELYKASRYLVDAGGKRLRPAVLILAAEAVGSNLRSVLPAAVAVELVHNFTLIHDDIMDRDDIRRGMPAVHVKWGEAGAILAGDTLYSKAFEILSKVENEPVRVLKCMDVLSKTCTEICEGQWLDMDFETRKKVTESEYLEMVEKKTSVLYAAAAKIGALLGGASDEVAEALSEYGRLIGIGFQMYDDVLDMTAPEEVLGKVRGSDLMEGKYTLIVINAFEKGVKLDIFGKGEATLEETEAAVRTLTECGSLDYVKNLAISYIEEGKEKLDVLRDCPEKTLLLQIADYMISREY</sequence>
<dbReference type="EC" id="2.5.1.29"/>
<dbReference type="EMBL" id="AE008384">
    <property type="protein sequence ID" value="AAM31463.1"/>
    <property type="molecule type" value="Genomic_DNA"/>
</dbReference>
<dbReference type="SMR" id="Q8PW34"/>
<dbReference type="DNASU" id="1480109"/>
<dbReference type="KEGG" id="mma:MM_1767"/>
<dbReference type="PATRIC" id="fig|192952.21.peg.2043"/>
<dbReference type="eggNOG" id="arCOG01726">
    <property type="taxonomic scope" value="Archaea"/>
</dbReference>
<dbReference type="HOGENOM" id="CLU_014015_2_1_2"/>
<dbReference type="UniPathway" id="UPA00389">
    <property type="reaction ID" value="UER00564"/>
</dbReference>
<dbReference type="Proteomes" id="UP000000595">
    <property type="component" value="Chromosome"/>
</dbReference>
<dbReference type="GO" id="GO:0004311">
    <property type="term" value="F:geranylgeranyl diphosphate synthase activity"/>
    <property type="evidence" value="ECO:0007669"/>
    <property type="project" value="UniProtKB-EC"/>
</dbReference>
<dbReference type="GO" id="GO:0046872">
    <property type="term" value="F:metal ion binding"/>
    <property type="evidence" value="ECO:0007669"/>
    <property type="project" value="UniProtKB-KW"/>
</dbReference>
<dbReference type="GO" id="GO:0033386">
    <property type="term" value="P:geranylgeranyl diphosphate biosynthetic process"/>
    <property type="evidence" value="ECO:0007669"/>
    <property type="project" value="UniProtKB-UniPathway"/>
</dbReference>
<dbReference type="CDD" id="cd00685">
    <property type="entry name" value="Trans_IPPS_HT"/>
    <property type="match status" value="1"/>
</dbReference>
<dbReference type="Gene3D" id="1.10.600.10">
    <property type="entry name" value="Farnesyl Diphosphate Synthase"/>
    <property type="match status" value="1"/>
</dbReference>
<dbReference type="InterPro" id="IPR008949">
    <property type="entry name" value="Isoprenoid_synthase_dom_sf"/>
</dbReference>
<dbReference type="InterPro" id="IPR000092">
    <property type="entry name" value="Polyprenyl_synt"/>
</dbReference>
<dbReference type="InterPro" id="IPR033749">
    <property type="entry name" value="Polyprenyl_synt_CS"/>
</dbReference>
<dbReference type="PANTHER" id="PTHR12001">
    <property type="entry name" value="GERANYLGERANYL PYROPHOSPHATE SYNTHASE"/>
    <property type="match status" value="1"/>
</dbReference>
<dbReference type="PANTHER" id="PTHR12001:SF85">
    <property type="entry name" value="SHORT CHAIN ISOPRENYL DIPHOSPHATE SYNTHASE"/>
    <property type="match status" value="1"/>
</dbReference>
<dbReference type="Pfam" id="PF00348">
    <property type="entry name" value="polyprenyl_synt"/>
    <property type="match status" value="1"/>
</dbReference>
<dbReference type="SFLD" id="SFLDS00005">
    <property type="entry name" value="Isoprenoid_Synthase_Type_I"/>
    <property type="match status" value="1"/>
</dbReference>
<dbReference type="SFLD" id="SFLDG01017">
    <property type="entry name" value="Polyprenyl_Transferase_Like"/>
    <property type="match status" value="1"/>
</dbReference>
<dbReference type="SUPFAM" id="SSF48576">
    <property type="entry name" value="Terpenoid synthases"/>
    <property type="match status" value="1"/>
</dbReference>
<dbReference type="PROSITE" id="PS00723">
    <property type="entry name" value="POLYPRENYL_SYNTHASE_1"/>
    <property type="match status" value="1"/>
</dbReference>
<dbReference type="PROSITE" id="PS00444">
    <property type="entry name" value="POLYPRENYL_SYNTHASE_2"/>
    <property type="match status" value="1"/>
</dbReference>
<gene>
    <name type="ordered locus">MM_1767</name>
</gene>
<proteinExistence type="inferred from homology"/>
<evidence type="ECO:0000250" key="1"/>
<evidence type="ECO:0000250" key="2">
    <source>
        <dbReference type="UniProtKB" id="P14324"/>
    </source>
</evidence>
<evidence type="ECO:0000250" key="3">
    <source>
        <dbReference type="UniProtKB" id="Q12051"/>
    </source>
</evidence>
<evidence type="ECO:0000269" key="4">
    <source>
    </source>
</evidence>
<evidence type="ECO:0000305" key="5"/>
<keyword id="KW-0444">Lipid biosynthesis</keyword>
<keyword id="KW-0443">Lipid metabolism</keyword>
<keyword id="KW-0460">Magnesium</keyword>
<keyword id="KW-0479">Metal-binding</keyword>
<keyword id="KW-0808">Transferase</keyword>
<feature type="chain" id="PRO_0000419189" description="Geranylgeranyl diphosphate synthase">
    <location>
        <begin position="1"/>
        <end position="324"/>
    </location>
</feature>
<feature type="binding site" evidence="2">
    <location>
        <position position="46"/>
    </location>
    <ligand>
        <name>isopentenyl diphosphate</name>
        <dbReference type="ChEBI" id="CHEBI:128769"/>
    </ligand>
</feature>
<feature type="binding site" evidence="2">
    <location>
        <position position="49"/>
    </location>
    <ligand>
        <name>isopentenyl diphosphate</name>
        <dbReference type="ChEBI" id="CHEBI:128769"/>
    </ligand>
</feature>
<feature type="binding site" evidence="3">
    <location>
        <position position="78"/>
    </location>
    <ligand>
        <name>isopentenyl diphosphate</name>
        <dbReference type="ChEBI" id="CHEBI:128769"/>
    </ligand>
</feature>
<feature type="binding site" evidence="2">
    <location>
        <position position="85"/>
    </location>
    <ligand>
        <name>Mg(2+)</name>
        <dbReference type="ChEBI" id="CHEBI:18420"/>
        <label>1</label>
    </ligand>
</feature>
<feature type="binding site" evidence="2">
    <location>
        <position position="85"/>
    </location>
    <ligand>
        <name>Mg(2+)</name>
        <dbReference type="ChEBI" id="CHEBI:18420"/>
        <label>2</label>
    </ligand>
</feature>
<feature type="binding site" evidence="2">
    <location>
        <position position="89"/>
    </location>
    <ligand>
        <name>Mg(2+)</name>
        <dbReference type="ChEBI" id="CHEBI:18420"/>
        <label>1</label>
    </ligand>
</feature>
<feature type="binding site" evidence="2">
    <location>
        <position position="89"/>
    </location>
    <ligand>
        <name>Mg(2+)</name>
        <dbReference type="ChEBI" id="CHEBI:18420"/>
        <label>2</label>
    </ligand>
</feature>
<feature type="binding site" evidence="1">
    <location>
        <position position="94"/>
    </location>
    <ligand>
        <name>an all-trans-polyprenyl diphosphate</name>
        <dbReference type="ChEBI" id="CHEBI:58914"/>
    </ligand>
</feature>
<feature type="binding site" evidence="2">
    <location>
        <position position="95"/>
    </location>
    <ligand>
        <name>isopentenyl diphosphate</name>
        <dbReference type="ChEBI" id="CHEBI:128769"/>
    </ligand>
</feature>
<feature type="binding site" evidence="1">
    <location>
        <position position="176"/>
    </location>
    <ligand>
        <name>an all-trans-polyprenyl diphosphate</name>
        <dbReference type="ChEBI" id="CHEBI:58914"/>
    </ligand>
</feature>
<feature type="binding site" evidence="1">
    <location>
        <position position="177"/>
    </location>
    <ligand>
        <name>an all-trans-polyprenyl diphosphate</name>
        <dbReference type="ChEBI" id="CHEBI:58914"/>
    </ligand>
</feature>
<feature type="binding site" evidence="1">
    <location>
        <position position="214"/>
    </location>
    <ligand>
        <name>an all-trans-polyprenyl diphosphate</name>
        <dbReference type="ChEBI" id="CHEBI:58914"/>
    </ligand>
</feature>
<feature type="binding site" evidence="1">
    <location>
        <position position="231"/>
    </location>
    <ligand>
        <name>an all-trans-polyprenyl diphosphate</name>
        <dbReference type="ChEBI" id="CHEBI:58914"/>
    </ligand>
</feature>
<feature type="binding site" evidence="1">
    <location>
        <position position="241"/>
    </location>
    <ligand>
        <name>an all-trans-polyprenyl diphosphate</name>
        <dbReference type="ChEBI" id="CHEBI:58914"/>
    </ligand>
</feature>
<accession>Q8PW34</accession>
<protein>
    <recommendedName>
        <fullName>Geranylgeranyl diphosphate synthase</fullName>
        <ecNumber>2.5.1.29</ecNumber>
    </recommendedName>
</protein>